<keyword id="KW-0325">Glycoprotein</keyword>
<keyword id="KW-0349">Heme</keyword>
<keyword id="KW-0408">Iron</keyword>
<keyword id="KW-0479">Metal-binding</keyword>
<keyword id="KW-0503">Monooxygenase</keyword>
<keyword id="KW-0560">Oxidoreductase</keyword>
<keyword id="KW-1185">Reference proteome</keyword>
<keyword id="KW-0732">Signal</keyword>
<keyword id="KW-0843">Virulence</keyword>
<accession>E9RCR4</accession>
<accession>Q4WMJ6</accession>
<accession>Q5MBU0</accession>
<name>GLIC_ASPFU</name>
<evidence type="ECO:0000250" key="1">
    <source>
        <dbReference type="UniProtKB" id="P04798"/>
    </source>
</evidence>
<evidence type="ECO:0000255" key="2"/>
<evidence type="ECO:0000255" key="3">
    <source>
        <dbReference type="PROSITE-ProRule" id="PRU00498"/>
    </source>
</evidence>
<evidence type="ECO:0000269" key="4">
    <source>
    </source>
</evidence>
<evidence type="ECO:0000269" key="5">
    <source>
    </source>
</evidence>
<evidence type="ECO:0000269" key="6">
    <source>
    </source>
</evidence>
<evidence type="ECO:0000269" key="7">
    <source>
    </source>
</evidence>
<evidence type="ECO:0000269" key="8">
    <source>
    </source>
</evidence>
<evidence type="ECO:0000269" key="9">
    <source>
    </source>
</evidence>
<evidence type="ECO:0000269" key="10">
    <source>
    </source>
</evidence>
<evidence type="ECO:0000269" key="11">
    <source>
    </source>
</evidence>
<evidence type="ECO:0000269" key="12">
    <source>
    </source>
</evidence>
<evidence type="ECO:0000269" key="13">
    <source>
    </source>
</evidence>
<evidence type="ECO:0000269" key="14">
    <source>
    </source>
</evidence>
<evidence type="ECO:0000303" key="15">
    <source>
    </source>
</evidence>
<evidence type="ECO:0000305" key="16"/>
<feature type="signal peptide" evidence="2">
    <location>
        <begin position="1"/>
        <end position="19"/>
    </location>
</feature>
<feature type="chain" id="PRO_5003246483" description="Cytochrome P450 monooxygenase gliC">
    <location>
        <begin position="20"/>
        <end position="512"/>
    </location>
</feature>
<feature type="binding site" description="axial binding residue" evidence="1">
    <location>
        <position position="452"/>
    </location>
    <ligand>
        <name>heme</name>
        <dbReference type="ChEBI" id="CHEBI:30413"/>
    </ligand>
    <ligandPart>
        <name>Fe</name>
        <dbReference type="ChEBI" id="CHEBI:18248"/>
    </ligandPart>
</feature>
<feature type="glycosylation site" description="N-linked (GlcNAc...) asparagine" evidence="3">
    <location>
        <position position="118"/>
    </location>
</feature>
<feature type="glycosylation site" description="N-linked (GlcNAc...) asparagine" evidence="3">
    <location>
        <position position="421"/>
    </location>
</feature>
<feature type="glycosylation site" description="N-linked (GlcNAc...) asparagine" evidence="3">
    <location>
        <position position="434"/>
    </location>
</feature>
<proteinExistence type="evidence at protein level"/>
<protein>
    <recommendedName>
        <fullName evidence="15">Cytochrome P450 monooxygenase gliC</fullName>
        <ecNumber evidence="12">1.-.-.-</ecNumber>
    </recommendedName>
    <alternativeName>
        <fullName evidence="15">Gliotoxin biosynthesis protein C</fullName>
    </alternativeName>
</protein>
<reference key="1">
    <citation type="journal article" date="2005" name="FEMS Microbiol. Lett.">
        <title>Bioinformatic and expression analysis of the putative gliotoxin biosynthetic gene cluster of Aspergillus fumigatus.</title>
        <authorList>
            <person name="Gardiner D.M."/>
            <person name="Howlett B.J."/>
        </authorList>
    </citation>
    <scope>NUCLEOTIDE SEQUENCE [GENOMIC DNA]</scope>
    <scope>FUNCTION</scope>
    <source>
        <strain>ATCC MYA-4609 / CBS 101355 / FGSC A1100 / Af293</strain>
    </source>
</reference>
<reference key="2">
    <citation type="journal article" date="2005" name="Nature">
        <title>Genomic sequence of the pathogenic and allergenic filamentous fungus Aspergillus fumigatus.</title>
        <authorList>
            <person name="Nierman W.C."/>
            <person name="Pain A."/>
            <person name="Anderson M.J."/>
            <person name="Wortman J.R."/>
            <person name="Kim H.S."/>
            <person name="Arroyo J."/>
            <person name="Berriman M."/>
            <person name="Abe K."/>
            <person name="Archer D.B."/>
            <person name="Bermejo C."/>
            <person name="Bennett J.W."/>
            <person name="Bowyer P."/>
            <person name="Chen D."/>
            <person name="Collins M."/>
            <person name="Coulsen R."/>
            <person name="Davies R."/>
            <person name="Dyer P.S."/>
            <person name="Farman M.L."/>
            <person name="Fedorova N."/>
            <person name="Fedorova N.D."/>
            <person name="Feldblyum T.V."/>
            <person name="Fischer R."/>
            <person name="Fosker N."/>
            <person name="Fraser A."/>
            <person name="Garcia J.L."/>
            <person name="Garcia M.J."/>
            <person name="Goble A."/>
            <person name="Goldman G.H."/>
            <person name="Gomi K."/>
            <person name="Griffith-Jones S."/>
            <person name="Gwilliam R."/>
            <person name="Haas B.J."/>
            <person name="Haas H."/>
            <person name="Harris D.E."/>
            <person name="Horiuchi H."/>
            <person name="Huang J."/>
            <person name="Humphray S."/>
            <person name="Jimenez J."/>
            <person name="Keller N."/>
            <person name="Khouri H."/>
            <person name="Kitamoto K."/>
            <person name="Kobayashi T."/>
            <person name="Konzack S."/>
            <person name="Kulkarni R."/>
            <person name="Kumagai T."/>
            <person name="Lafton A."/>
            <person name="Latge J.-P."/>
            <person name="Li W."/>
            <person name="Lord A."/>
            <person name="Lu C."/>
            <person name="Majoros W.H."/>
            <person name="May G.S."/>
            <person name="Miller B.L."/>
            <person name="Mohamoud Y."/>
            <person name="Molina M."/>
            <person name="Monod M."/>
            <person name="Mouyna I."/>
            <person name="Mulligan S."/>
            <person name="Murphy L.D."/>
            <person name="O'Neil S."/>
            <person name="Paulsen I."/>
            <person name="Penalva M.A."/>
            <person name="Pertea M."/>
            <person name="Price C."/>
            <person name="Pritchard B.L."/>
            <person name="Quail M.A."/>
            <person name="Rabbinowitsch E."/>
            <person name="Rawlins N."/>
            <person name="Rajandream M.A."/>
            <person name="Reichard U."/>
            <person name="Renauld H."/>
            <person name="Robson G.D."/>
            <person name="Rodriguez de Cordoba S."/>
            <person name="Rodriguez-Pena J.M."/>
            <person name="Ronning C.M."/>
            <person name="Rutter S."/>
            <person name="Salzberg S.L."/>
            <person name="Sanchez M."/>
            <person name="Sanchez-Ferrero J.C."/>
            <person name="Saunders D."/>
            <person name="Seeger K."/>
            <person name="Squares R."/>
            <person name="Squares S."/>
            <person name="Takeuchi M."/>
            <person name="Tekaia F."/>
            <person name="Turner G."/>
            <person name="Vazquez de Aldana C.R."/>
            <person name="Weidman J."/>
            <person name="White O."/>
            <person name="Woodward J.R."/>
            <person name="Yu J.-H."/>
            <person name="Fraser C.M."/>
            <person name="Galagan J.E."/>
            <person name="Asai K."/>
            <person name="Machida M."/>
            <person name="Hall N."/>
            <person name="Barrell B.G."/>
            <person name="Denning D.W."/>
        </authorList>
    </citation>
    <scope>NUCLEOTIDE SEQUENCE [LARGE SCALE GENOMIC DNA]</scope>
    <source>
        <strain>ATCC MYA-4609 / CBS 101355 / FGSC A1100 / Af293</strain>
    </source>
</reference>
<reference key="3">
    <citation type="journal article" date="2006" name="Biochemistry">
        <title>GliP, a multimodular nonribosomal peptide synthetase in Aspergillus fumigatus, makes the diketopiperazine scaffold of gliotoxin.</title>
        <authorList>
            <person name="Balibar C.J."/>
            <person name="Walsh C.T."/>
        </authorList>
    </citation>
    <scope>FUNCTION</scope>
</reference>
<reference key="4">
    <citation type="journal article" date="2007" name="Eukaryot. Cell">
        <title>Gliotoxin is a virulence factor of Aspergillus fumigatus: gliP deletion attenuates virulence in mice immunosuppressed with hydrocortisone.</title>
        <authorList>
            <person name="Sugui J.A."/>
            <person name="Pardo J."/>
            <person name="Chang Y.C."/>
            <person name="Zarember K.A."/>
            <person name="Nardone G."/>
            <person name="Galvez E.M."/>
            <person name="Mullbacher A."/>
            <person name="Gallin J.I."/>
            <person name="Simon M.M."/>
            <person name="Kwon-Chung K.J."/>
        </authorList>
    </citation>
    <scope>FUNCTION</scope>
</reference>
<reference key="5">
    <citation type="journal article" date="2008" name="J. Infect. Dis.">
        <title>Gliotoxin production in Aspergillus fumigatus contributes to host-specific differences in virulence.</title>
        <authorList>
            <person name="Spikes S."/>
            <person name="Xu R."/>
            <person name="Nguyen C.K."/>
            <person name="Chamilos G."/>
            <person name="Kontoyiannis D.P."/>
            <person name="Jacobson R.H."/>
            <person name="Ejzykowicz D.E."/>
            <person name="Chiang L.Y."/>
            <person name="Filler S.G."/>
            <person name="May G.S."/>
        </authorList>
    </citation>
    <scope>FUNCTION</scope>
</reference>
<reference key="6">
    <citation type="journal article" date="2010" name="PLoS Pathog.">
        <title>Self-protection against gliotoxin--a component of the gliotoxin biosynthetic cluster, GliT, completely protects Aspergillus fumigatus against exogenous gliotoxin.</title>
        <authorList>
            <person name="Schrettl M."/>
            <person name="Carberry S."/>
            <person name="Kavanagh K."/>
            <person name="Haas H."/>
            <person name="Jones G.W."/>
            <person name="O'Brien J."/>
            <person name="Nolan A."/>
            <person name="Stephens J."/>
            <person name="Fenelon O."/>
            <person name="Doyle S."/>
        </authorList>
    </citation>
    <scope>FUNCTION</scope>
</reference>
<reference key="7">
    <citation type="journal article" date="2011" name="Chem. Biol.">
        <title>The role of glutathione S-transferase GliG in gliotoxin biosynthesis in Aspergillus fumigatus.</title>
        <authorList>
            <person name="Davis C."/>
            <person name="Carberry S."/>
            <person name="Schrettl M."/>
            <person name="Singh I."/>
            <person name="Stephens J.C."/>
            <person name="Barry S.M."/>
            <person name="Kavanagh K."/>
            <person name="Challis G.L."/>
            <person name="Brougham D."/>
            <person name="Doyle S."/>
        </authorList>
    </citation>
    <scope>FUNCTION</scope>
</reference>
<reference key="8">
    <citation type="journal article" date="2011" name="J. Am. Chem. Soc.">
        <title>Identification of cryptic products of the gliotoxin gene cluster using NMR-based comparative metabolomics and a model for gliotoxin biosynthesis.</title>
        <authorList>
            <person name="Forseth R.R."/>
            <person name="Fox E.M."/>
            <person name="Chung D."/>
            <person name="Howlett B.J."/>
            <person name="Keller N.P."/>
            <person name="Schroeder F.C."/>
        </authorList>
    </citation>
    <scope>FUNCTION</scope>
</reference>
<reference key="9">
    <citation type="journal article" date="2011" name="J. Am. Chem. Soc.">
        <title>A dedicated glutathione S-transferase mediates carbon-sulfur bond formation in gliotoxin biosynthesis.</title>
        <authorList>
            <person name="Scharf D.H."/>
            <person name="Remme N."/>
            <person name="Habel A."/>
            <person name="Chankhamjon P."/>
            <person name="Scherlach K."/>
            <person name="Heinekamp T."/>
            <person name="Hortschansky P."/>
            <person name="Brakhage A.A."/>
            <person name="Hertweck C."/>
        </authorList>
    </citation>
    <scope>FUNCTION</scope>
</reference>
<reference key="10">
    <citation type="journal article" date="2012" name="Angew. Chem. Int. Ed.">
        <title>Epidithiol formation by an unprecedented twin carbon-sulfur lyase in the gliotoxin pathway.</title>
        <authorList>
            <person name="Scharf D.H."/>
            <person name="Chankhamjon P."/>
            <person name="Scherlach K."/>
            <person name="Heinekamp T."/>
            <person name="Roth M."/>
            <person name="Brakhage A.A."/>
            <person name="Hertweck C."/>
        </authorList>
    </citation>
    <scope>FUNCTION</scope>
</reference>
<reference key="11">
    <citation type="journal article" date="2012" name="Eukaryot. Cell">
        <title>The Aspergillus fumigatus protein GliK protects against oxidative stress and is essential for gliotoxin biosynthesis.</title>
        <authorList>
            <person name="Gallagher L."/>
            <person name="Owens R.A."/>
            <person name="Dolan S.K."/>
            <person name="O'Keeffe G."/>
            <person name="Schrettl M."/>
            <person name="Kavanagh K."/>
            <person name="Jones G.W."/>
            <person name="Doyle S."/>
        </authorList>
    </citation>
    <scope>FUNCTION</scope>
</reference>
<reference key="12">
    <citation type="journal article" date="2013" name="Angew. Chem. Int. Ed.">
        <title>Epidithiodiketopiperazine biosynthesis: a four-enzyme cascade converts glutathione conjugates into transannular disulfide bridges.</title>
        <authorList>
            <person name="Scharf D.H."/>
            <person name="Chankhamjon P."/>
            <person name="Scherlach K."/>
            <person name="Heinekamp T."/>
            <person name="Willing K."/>
            <person name="Brakhage A.A."/>
            <person name="Hertweck C."/>
        </authorList>
    </citation>
    <scope>FUNCTION</scope>
</reference>
<reference key="13">
    <citation type="journal article" date="2013" name="Bioorg. Med. Chem. Lett.">
        <title>Reconstitution of the early steps of gliotoxin biosynthesis in Aspergillus nidulans reveals the role of the monooxygenase GliC.</title>
        <authorList>
            <person name="Chang S.L."/>
            <person name="Chiang Y.M."/>
            <person name="Yeh H.H."/>
            <person name="Wu T.K."/>
            <person name="Wang C.C."/>
        </authorList>
    </citation>
    <scope>FUNCTION</scope>
    <scope>CATALYTIC ACTIVITY</scope>
</reference>
<reference key="14">
    <citation type="journal article" date="2014" name="J. Am. Chem. Soc.">
        <title>Opposed effects of enzymatic gliotoxin N- and S-methylations.</title>
        <authorList>
            <person name="Scharf D.H."/>
            <person name="Habel A."/>
            <person name="Heinekamp T."/>
            <person name="Brakhage A.A."/>
            <person name="Hertweck C."/>
        </authorList>
    </citation>
    <scope>FUNCTION</scope>
</reference>
<reference key="15">
    <citation type="journal article" date="2015" name="Eukaryot. Cell">
        <title>Interplay between gliotoxin resistance, secretion, and the methyl/methionine cycle in Aspergillus fumigatus.</title>
        <authorList>
            <person name="Owens R.A."/>
            <person name="O'Keeffe G."/>
            <person name="Smith E.B."/>
            <person name="Dolan S.K."/>
            <person name="Hammel S."/>
            <person name="Sheridan K.J."/>
            <person name="Fitzpatrick D.A."/>
            <person name="Keane T.M."/>
            <person name="Jones G.W."/>
            <person name="Doyle S."/>
        </authorList>
    </citation>
    <scope>FUNCTION</scope>
</reference>
<sequence>MAFTLTILVPCMVLALVAARPVLYWVLSVVIDAFLRWKYPLPHHAGSKPMPRARYTWPNGQGTEKFFNGRSAARQWRQRWGPIYQIWSGWCPEIVLTTPTHAVQFFRNSHRHTKAVNNDSGWLFGEVLGVCVGLLSGTDWKRVRQQVEDGFSRPTAARYTGDLVFLAREYLQNTLLASSEQSLENKGIIHVEPAKTLQFYPFLSVAQILFGRLSPMQRTQLTTLAPLREELFKEVIRGGINRLSIAPWFKSRGVRLLNEFQTQWEQFVEDAYHAAVKRNQSPRPLVIGLWEAYQAGTISKRECLQTLDESLYANLDVTTHALSWNVLLLAENGEAQTELRQEVLSALQSEASESYERYIDRDDTFLAACILESARLRPILPFSNPESAPEDLYVDGYLIPANTNVIVDAQAINIDNPYWVNGTQYNPRRFFSLNKSDVRHNMWRFGFGPRQCLGKHIGERMLKAIVAEIIRQYVISISADSALKNDLQEDSWVGLPATRIQCVPVGREVEKN</sequence>
<gene>
    <name evidence="15" type="primary">gliC</name>
    <name type="ORF">AFUA_6G09670</name>
</gene>
<comment type="function">
    <text evidence="4 5 6 7 8 9 10 11 12 13 14">Cytochrome P450 monooxygenase; part of the gene cluster that mediates the biosynthesis of gliotoxin, a member of the epipolythiodioxopiperazine (ETP) class of toxins characterized by a disulfide bridged cyclic dipeptide (PubMed:15979823, PubMed:21612254). The first step in gliotoxin biosynthesis is the condensation of serine and phenylalanine to form the cyclo-L-phenylalanyl-L-serine diketopiperazine (DKP) by the NRPS gliP (PubMed:17154540, PubMed:21612254). GliP is also able to produce the DKP cyclo-L-tryptophanyl-L-serine, suggesting that the substrate specificity of the first adenylation (A) domain in gliP is sufficiently relaxed to accommodate both L-Phe and L-Trp (PubMed:23434416). The cytochrome P450 monooxygenase gliC has been shown to catalyze the subsequent hydroxylation of the alpha-carbon of L-Phe in cyclo-L-phenylalanyl-L-serine whereas the second cytochrome P450 enzyme, gliF, is presumably involved in the modification of the DKP side chain (PubMed:23434416, PubMed:24039048). The glutathione S-transferase (GST) gliG then forms a bis-glutathionylated biosynthetic intermediate which is responsible for the sulfurization of gliotoxin (PubMed:21513890, PubMed:21749092). This bis-glutathionylated intermediate is subsequently processed by the gamma-glutamyl cyclotransferase gliK to remove both gamma-glutamyl moieties (PubMed:22903976, PubMed:24039048). Subsequent processing via gliI yields a biosynthetic intermediate, which is N-methylated via the N-methyltransferase gliN, before the gliotoxin oxidoreductase gliT-mediated disulfide bridge closure (PubMed:20548963, PubMed:22936680, PubMed:24039048, PubMed:25062268). GliN-mediated amide methylation confers stability to ETP, damping the spontaneous formation of tri- and tetrasulfides (PubMed:25062268). Intracellular dithiol gliotoxin oxidized by gliT is subsequently effluxed by gliA (PubMed:26150413). Gliotoxin contributes to pathogenesis during invasive aspergillosis (PubMed:17601876, PubMed:18199036). In macrophages and neutrophils, gliotoxin showed inhibition of various different cell functions including cytokine production, antigen presentation, phagocytosis, and production of reactive oxygen species (PubMed:17601876).</text>
</comment>
<comment type="cofactor">
    <cofactor evidence="1">
        <name>heme</name>
        <dbReference type="ChEBI" id="CHEBI:30413"/>
    </cofactor>
</comment>
<comment type="pathway">
    <text evidence="12">Mycotoxin biosynthesis.</text>
</comment>
<comment type="similarity">
    <text evidence="16">Belongs to the cytochrome P450 family.</text>
</comment>
<dbReference type="EC" id="1.-.-.-" evidence="12"/>
<dbReference type="EMBL" id="AY838877">
    <property type="protein sequence ID" value="AAW03306.1"/>
    <property type="molecule type" value="Genomic_DNA"/>
</dbReference>
<dbReference type="EMBL" id="AAHF01000006">
    <property type="protein sequence ID" value="EAL88818.2"/>
    <property type="molecule type" value="Genomic_DNA"/>
</dbReference>
<dbReference type="RefSeq" id="XP_750856.2">
    <property type="nucleotide sequence ID" value="XM_745763.2"/>
</dbReference>
<dbReference type="SMR" id="E9RCR4"/>
<dbReference type="STRING" id="330879.E9RCR4"/>
<dbReference type="GlyCosmos" id="E9RCR4">
    <property type="glycosylation" value="3 sites, No reported glycans"/>
</dbReference>
<dbReference type="EnsemblFungi" id="EAL88818">
    <property type="protein sequence ID" value="EAL88818"/>
    <property type="gene ID" value="AFUA_6G09670"/>
</dbReference>
<dbReference type="GeneID" id="3508161"/>
<dbReference type="KEGG" id="afm:AFUA_6G09670"/>
<dbReference type="eggNOG" id="KOG0157">
    <property type="taxonomic scope" value="Eukaryota"/>
</dbReference>
<dbReference type="HOGENOM" id="CLU_042557_2_0_1"/>
<dbReference type="InParanoid" id="E9RCR4"/>
<dbReference type="OMA" id="WPNGQGT"/>
<dbReference type="OrthoDB" id="2789670at2759"/>
<dbReference type="BioCyc" id="MetaCyc:MONOMER-18848"/>
<dbReference type="Proteomes" id="UP000002530">
    <property type="component" value="Chromosome 6"/>
</dbReference>
<dbReference type="GO" id="GO:0020037">
    <property type="term" value="F:heme binding"/>
    <property type="evidence" value="ECO:0007669"/>
    <property type="project" value="InterPro"/>
</dbReference>
<dbReference type="GO" id="GO:0005506">
    <property type="term" value="F:iron ion binding"/>
    <property type="evidence" value="ECO:0007669"/>
    <property type="project" value="InterPro"/>
</dbReference>
<dbReference type="GO" id="GO:0004497">
    <property type="term" value="F:monooxygenase activity"/>
    <property type="evidence" value="ECO:0007669"/>
    <property type="project" value="UniProtKB-KW"/>
</dbReference>
<dbReference type="GO" id="GO:0016705">
    <property type="term" value="F:oxidoreductase activity, acting on paired donors, with incorporation or reduction of molecular oxygen"/>
    <property type="evidence" value="ECO:0007669"/>
    <property type="project" value="InterPro"/>
</dbReference>
<dbReference type="GO" id="GO:0044283">
    <property type="term" value="P:small molecule biosynthetic process"/>
    <property type="evidence" value="ECO:0007669"/>
    <property type="project" value="UniProtKB-ARBA"/>
</dbReference>
<dbReference type="CDD" id="cd20615">
    <property type="entry name" value="CYP_GliC-like"/>
    <property type="match status" value="1"/>
</dbReference>
<dbReference type="Gene3D" id="1.10.630.10">
    <property type="entry name" value="Cytochrome P450"/>
    <property type="match status" value="1"/>
</dbReference>
<dbReference type="InterPro" id="IPR001128">
    <property type="entry name" value="Cyt_P450"/>
</dbReference>
<dbReference type="InterPro" id="IPR017972">
    <property type="entry name" value="Cyt_P450_CS"/>
</dbReference>
<dbReference type="InterPro" id="IPR002401">
    <property type="entry name" value="Cyt_P450_E_grp-I"/>
</dbReference>
<dbReference type="InterPro" id="IPR036396">
    <property type="entry name" value="Cyt_P450_sf"/>
</dbReference>
<dbReference type="PANTHER" id="PTHR24303:SF31">
    <property type="entry name" value="CYTOCHROME P450 307A1-RELATED"/>
    <property type="match status" value="1"/>
</dbReference>
<dbReference type="PANTHER" id="PTHR24303">
    <property type="entry name" value="HEME-BINDING MONOOXYGENASE FAMILY"/>
    <property type="match status" value="1"/>
</dbReference>
<dbReference type="Pfam" id="PF00067">
    <property type="entry name" value="p450"/>
    <property type="match status" value="1"/>
</dbReference>
<dbReference type="PRINTS" id="PR00463">
    <property type="entry name" value="EP450I"/>
</dbReference>
<dbReference type="PRINTS" id="PR00385">
    <property type="entry name" value="P450"/>
</dbReference>
<dbReference type="SUPFAM" id="SSF48264">
    <property type="entry name" value="Cytochrome P450"/>
    <property type="match status" value="1"/>
</dbReference>
<dbReference type="PROSITE" id="PS00086">
    <property type="entry name" value="CYTOCHROME_P450"/>
    <property type="match status" value="1"/>
</dbReference>
<organism>
    <name type="scientific">Aspergillus fumigatus (strain ATCC MYA-4609 / CBS 101355 / FGSC A1100 / Af293)</name>
    <name type="common">Neosartorya fumigata</name>
    <dbReference type="NCBI Taxonomy" id="330879"/>
    <lineage>
        <taxon>Eukaryota</taxon>
        <taxon>Fungi</taxon>
        <taxon>Dikarya</taxon>
        <taxon>Ascomycota</taxon>
        <taxon>Pezizomycotina</taxon>
        <taxon>Eurotiomycetes</taxon>
        <taxon>Eurotiomycetidae</taxon>
        <taxon>Eurotiales</taxon>
        <taxon>Aspergillaceae</taxon>
        <taxon>Aspergillus</taxon>
        <taxon>Aspergillus subgen. Fumigati</taxon>
    </lineage>
</organism>